<protein>
    <recommendedName>
        <fullName evidence="2">Nucleoprotein</fullName>
    </recommendedName>
    <alternativeName>
        <fullName evidence="2">Nucleocapsid protein</fullName>
        <shortName evidence="2">NC</shortName>
        <shortName evidence="2">Protein N</shortName>
    </alternativeName>
</protein>
<comment type="function">
    <text evidence="2">Packages the positive strand viral genome RNA into a helical ribonucleocapsid (RNP) and plays a fundamental role during virion assembly through its interactions with the viral genome and membrane protein M. Plays an important role in enhancing the efficiency of subgenomic viral RNA transcription as well as viral replication.</text>
</comment>
<comment type="subunit">
    <text evidence="2">Homooligomer. Both monomeric and oligomeric forms interact with RNA. Interacts with protein M. Interacts with NSP3; this interaction serves to tether the genome to the newly translated replicase-transcriptase complex at a very early stage of infection.</text>
</comment>
<comment type="subcellular location">
    <subcellularLocation>
        <location evidence="2">Virion</location>
    </subcellularLocation>
    <subcellularLocation>
        <location evidence="2">Host endoplasmic reticulum-Golgi intermediate compartment</location>
    </subcellularLocation>
    <subcellularLocation>
        <location evidence="2">Host Golgi apparatus</location>
    </subcellularLocation>
    <text evidence="2">Located inside the virion, complexed with the viral RNA. Probably associates with ER-derived membranes where it participates in viral RNA synthesis and virus budding.</text>
</comment>
<comment type="PTM">
    <text evidence="2">ADP-ribosylated. The ADP-ribosylation is retained in the virion during infection.</text>
</comment>
<comment type="PTM">
    <text evidence="2">Phosphorylated on serine and threonine residues.</text>
</comment>
<comment type="similarity">
    <text evidence="2">Belongs to the betacoronavirus nucleocapsid protein family.</text>
</comment>
<keyword id="KW-0013">ADP-ribosylation</keyword>
<keyword id="KW-1040">Host Golgi apparatus</keyword>
<keyword id="KW-0597">Phosphoprotein</keyword>
<keyword id="KW-0687">Ribonucleoprotein</keyword>
<keyword id="KW-0694">RNA-binding</keyword>
<keyword id="KW-0804">Transcription</keyword>
<keyword id="KW-0805">Transcription regulation</keyword>
<keyword id="KW-0543">Viral nucleoprotein</keyword>
<keyword id="KW-0946">Virion</keyword>
<evidence type="ECO:0000250" key="1">
    <source>
        <dbReference type="UniProtKB" id="P0DTC9"/>
    </source>
</evidence>
<evidence type="ECO:0000255" key="2">
    <source>
        <dbReference type="HAMAP-Rule" id="MF_04096"/>
    </source>
</evidence>
<evidence type="ECO:0000255" key="3">
    <source>
        <dbReference type="PROSITE-ProRule" id="PRU01276"/>
    </source>
</evidence>
<evidence type="ECO:0000255" key="4">
    <source>
        <dbReference type="PROSITE-ProRule" id="PRU01277"/>
    </source>
</evidence>
<evidence type="ECO:0000256" key="5">
    <source>
        <dbReference type="SAM" id="MobiDB-lite"/>
    </source>
</evidence>
<gene>
    <name evidence="2" type="primary">N</name>
    <name type="ORF">7a</name>
</gene>
<name>NCAP_CVBLS</name>
<sequence>MSFTPGKQSSSRASSGNRSGNGILKWADQSDQSRNVQTRGRRAQPKQTATSQQPSAGNVVPYYSWFSGITQFQKGKEFEFAEGQGVPIAPGVPATEAKGYWYRHNRRSFKTADGNQRQLLPRWYFYYLGTGPHAKDQYGTDIDGVFWVASNQADVNTPADILDRDPSSDEAIPTRFPPGTVLPQGYYIEGSGRSAPNSRSTSRTSSRASSAGSRSRANSGNRTPTSGVTPDMADQIASLVLAKLGKDATKPQQVTKQTAKEIRQKILNKPRQKRSPNKQCTVQQCFGKRGPNQNFGGGEMLKLGTSDPQFPILAELAPTAGAFFFGSRLELAKVQNLSGNLDEPQKDVYELRYNGAIRFDSTLSGFETIMKVLNENLNAYQQQDGMMNMSPKPQRQRGQKNGQGENDNISVAAPKSRVQQNKSRELTAEDISLLKKMDEPFTEDTSEI</sequence>
<reference key="1">
    <citation type="journal article" date="1998" name="Virus Genes">
        <title>Nucleotide and predicted amino acid sequences of all genes encoded by the 3' genomic portion (9.5 kb) of respiratory bovine coronaviruses and comparisons among respiratory and enteric coronaviruses.</title>
        <authorList>
            <person name="Chouljenko V.N."/>
            <person name="Kousoulas K.G."/>
            <person name="Lin X.Q."/>
            <person name="Storz J."/>
        </authorList>
    </citation>
    <scope>NUCLEOTIDE SEQUENCE [GENOMIC RNA]</scope>
    <source>
        <strain>Isolate LSU-94LSS-051-2</strain>
    </source>
</reference>
<feature type="chain" id="PRO_0000105991" description="Nucleoprotein">
    <location>
        <begin position="1"/>
        <end position="448"/>
    </location>
</feature>
<feature type="domain" description="CoV N NTD" evidence="3">
    <location>
        <begin position="61"/>
        <end position="190"/>
    </location>
</feature>
<feature type="domain" description="CoV N CTD" evidence="4">
    <location>
        <begin position="259"/>
        <end position="384"/>
    </location>
</feature>
<feature type="region of interest" description="Disordered" evidence="5">
    <location>
        <begin position="1"/>
        <end position="55"/>
    </location>
</feature>
<feature type="region of interest" description="RNA-binding" evidence="2">
    <location>
        <begin position="52"/>
        <end position="194"/>
    </location>
</feature>
<feature type="region of interest" description="Disordered" evidence="5">
    <location>
        <begin position="157"/>
        <end position="231"/>
    </location>
</feature>
<feature type="region of interest" description="Dimerization" evidence="2">
    <location>
        <begin position="266"/>
        <end position="384"/>
    </location>
</feature>
<feature type="region of interest" description="Disordered" evidence="5">
    <location>
        <begin position="266"/>
        <end position="298"/>
    </location>
</feature>
<feature type="region of interest" description="Disordered" evidence="5">
    <location>
        <begin position="385"/>
        <end position="448"/>
    </location>
</feature>
<feature type="compositionally biased region" description="Low complexity" evidence="5">
    <location>
        <begin position="9"/>
        <end position="22"/>
    </location>
</feature>
<feature type="compositionally biased region" description="Polar residues" evidence="5">
    <location>
        <begin position="29"/>
        <end position="38"/>
    </location>
</feature>
<feature type="compositionally biased region" description="Polar residues" evidence="5">
    <location>
        <begin position="45"/>
        <end position="55"/>
    </location>
</feature>
<feature type="compositionally biased region" description="Low complexity" evidence="5">
    <location>
        <begin position="193"/>
        <end position="223"/>
    </location>
</feature>
<feature type="compositionally biased region" description="Basic residues" evidence="5">
    <location>
        <begin position="266"/>
        <end position="276"/>
    </location>
</feature>
<feature type="compositionally biased region" description="Polar residues" evidence="5">
    <location>
        <begin position="399"/>
        <end position="409"/>
    </location>
</feature>
<feature type="compositionally biased region" description="Basic and acidic residues" evidence="5">
    <location>
        <begin position="422"/>
        <end position="439"/>
    </location>
</feature>
<feature type="binding site" evidence="1">
    <location>
        <position position="106"/>
    </location>
    <ligand>
        <name>RNA</name>
        <dbReference type="ChEBI" id="CHEBI:33697"/>
    </ligand>
</feature>
<feature type="binding site" evidence="1">
    <location>
        <position position="122"/>
    </location>
    <ligand>
        <name>RNA</name>
        <dbReference type="ChEBI" id="CHEBI:33697"/>
    </ligand>
</feature>
<feature type="binding site" evidence="1">
    <location>
        <position position="164"/>
    </location>
    <ligand>
        <name>RNA</name>
        <dbReference type="ChEBI" id="CHEBI:33697"/>
    </ligand>
</feature>
<feature type="modified residue" description="Phosphoserine; by host" evidence="2">
    <location>
        <position position="167"/>
    </location>
</feature>
<feature type="modified residue" description="Phosphothreonine; by host" evidence="2">
    <location>
        <position position="174"/>
    </location>
</feature>
<feature type="modified residue" description="Phosphoserine; by host" evidence="2">
    <location>
        <position position="191"/>
    </location>
</feature>
<feature type="modified residue" description="Phosphoserine; by host" evidence="2">
    <location>
        <position position="390"/>
    </location>
</feature>
<feature type="modified residue" description="Phosphoserine; by host" evidence="2">
    <location>
        <position position="423"/>
    </location>
</feature>
<feature type="modified residue" description="Phosphothreonine; by host" evidence="2">
    <location>
        <position position="427"/>
    </location>
</feature>
<proteinExistence type="inferred from homology"/>
<accession>Q9QAR1</accession>
<organism>
    <name type="scientific">Bovine coronavirus (strain LSU-94LSS-051)</name>
    <name type="common">BCoV-LSU</name>
    <name type="synonym">BCV</name>
    <dbReference type="NCBI Taxonomy" id="233261"/>
    <lineage>
        <taxon>Viruses</taxon>
        <taxon>Riboviria</taxon>
        <taxon>Orthornavirae</taxon>
        <taxon>Pisuviricota</taxon>
        <taxon>Pisoniviricetes</taxon>
        <taxon>Nidovirales</taxon>
        <taxon>Cornidovirineae</taxon>
        <taxon>Coronaviridae</taxon>
        <taxon>Orthocoronavirinae</taxon>
        <taxon>Betacoronavirus</taxon>
        <taxon>Embecovirus</taxon>
        <taxon>Betacoronavirus 1</taxon>
    </lineage>
</organism>
<dbReference type="EMBL" id="AF058943">
    <property type="protein sequence ID" value="AAF25515.1"/>
    <property type="molecule type" value="Genomic_RNA"/>
</dbReference>
<dbReference type="SMR" id="Q9QAR1"/>
<dbReference type="GO" id="GO:0044172">
    <property type="term" value="C:host cell endoplasmic reticulum-Golgi intermediate compartment"/>
    <property type="evidence" value="ECO:0007669"/>
    <property type="project" value="UniProtKB-SubCell"/>
</dbReference>
<dbReference type="GO" id="GO:0044177">
    <property type="term" value="C:host cell Golgi apparatus"/>
    <property type="evidence" value="ECO:0007669"/>
    <property type="project" value="UniProtKB-SubCell"/>
</dbReference>
<dbReference type="GO" id="GO:1990904">
    <property type="term" value="C:ribonucleoprotein complex"/>
    <property type="evidence" value="ECO:0007669"/>
    <property type="project" value="UniProtKB-KW"/>
</dbReference>
<dbReference type="GO" id="GO:0019013">
    <property type="term" value="C:viral nucleocapsid"/>
    <property type="evidence" value="ECO:0007669"/>
    <property type="project" value="UniProtKB-UniRule"/>
</dbReference>
<dbReference type="GO" id="GO:0003723">
    <property type="term" value="F:RNA binding"/>
    <property type="evidence" value="ECO:0007669"/>
    <property type="project" value="UniProtKB-UniRule"/>
</dbReference>
<dbReference type="CDD" id="cd21595">
    <property type="entry name" value="CoV_N-CTD"/>
    <property type="match status" value="1"/>
</dbReference>
<dbReference type="CDD" id="cd21554">
    <property type="entry name" value="CoV_N-NTD"/>
    <property type="match status" value="1"/>
</dbReference>
<dbReference type="HAMAP" id="MF_04096">
    <property type="entry name" value="BETA_CORONA_NCAP"/>
    <property type="match status" value="1"/>
</dbReference>
<dbReference type="InterPro" id="IPR044344">
    <property type="entry name" value="N_prot_C_CoV"/>
</dbReference>
<dbReference type="InterPro" id="IPR044345">
    <property type="entry name" value="N_prot_N_CoV"/>
</dbReference>
<dbReference type="InterPro" id="IPR043505">
    <property type="entry name" value="NCAP_bCoV"/>
</dbReference>
<dbReference type="InterPro" id="IPR001218">
    <property type="entry name" value="Nucleocap_CoV"/>
</dbReference>
<dbReference type="InterPro" id="IPR037179">
    <property type="entry name" value="Nucleocapsid_C"/>
</dbReference>
<dbReference type="InterPro" id="IPR037195">
    <property type="entry name" value="Nucleocapsid_N"/>
</dbReference>
<dbReference type="Pfam" id="PF00937">
    <property type="entry name" value="CoV_nucleocap"/>
    <property type="match status" value="1"/>
</dbReference>
<dbReference type="PIRSF" id="PIRSF003888">
    <property type="entry name" value="Corona_nucleocap"/>
    <property type="match status" value="1"/>
</dbReference>
<dbReference type="SUPFAM" id="SSF110304">
    <property type="entry name" value="Coronavirus RNA-binding domain"/>
    <property type="match status" value="1"/>
</dbReference>
<dbReference type="SUPFAM" id="SSF103068">
    <property type="entry name" value="Nucleocapsid protein dimerization domain"/>
    <property type="match status" value="1"/>
</dbReference>
<dbReference type="PROSITE" id="PS51929">
    <property type="entry name" value="COV_N_CTD"/>
    <property type="match status" value="1"/>
</dbReference>
<dbReference type="PROSITE" id="PS51928">
    <property type="entry name" value="COV_N_NTD"/>
    <property type="match status" value="1"/>
</dbReference>
<organismHost>
    <name type="scientific">Bos taurus</name>
    <name type="common">Bovine</name>
    <dbReference type="NCBI Taxonomy" id="9913"/>
</organismHost>